<proteinExistence type="inferred from homology"/>
<gene>
    <name evidence="1" type="primary">rplP</name>
    <name type="ordered locus">MADE_1002295</name>
</gene>
<comment type="function">
    <text evidence="1">Binds 23S rRNA and is also seen to make contacts with the A and possibly P site tRNAs.</text>
</comment>
<comment type="subunit">
    <text evidence="1">Part of the 50S ribosomal subunit.</text>
</comment>
<comment type="similarity">
    <text evidence="1">Belongs to the universal ribosomal protein uL16 family.</text>
</comment>
<feature type="chain" id="PRO_1000142917" description="Large ribosomal subunit protein uL16">
    <location>
        <begin position="1"/>
        <end position="136"/>
    </location>
</feature>
<sequence length="136" mass="15550">MLQPKRMKFRKMHKGRNRGFAAGSTVAFGTYGLKAVGRGRMTARQIEAARRAMTRHVKRQGKIWIRVFPDKPITEKPLEVRQGKGKGNVEYWVCQIQPGRVLYEMEGVPENLAREAFELAAAKLPFKTTFVTRTVM</sequence>
<dbReference type="EMBL" id="CP001103">
    <property type="protein sequence ID" value="AEA96608.1"/>
    <property type="molecule type" value="Genomic_DNA"/>
</dbReference>
<dbReference type="RefSeq" id="WP_012516964.1">
    <property type="nucleotide sequence ID" value="NC_011138.3"/>
</dbReference>
<dbReference type="SMR" id="B4S098"/>
<dbReference type="KEGG" id="amc:MADE_1002295"/>
<dbReference type="HOGENOM" id="CLU_078858_2_1_6"/>
<dbReference type="Proteomes" id="UP000001870">
    <property type="component" value="Chromosome"/>
</dbReference>
<dbReference type="GO" id="GO:0022625">
    <property type="term" value="C:cytosolic large ribosomal subunit"/>
    <property type="evidence" value="ECO:0007669"/>
    <property type="project" value="TreeGrafter"/>
</dbReference>
<dbReference type="GO" id="GO:0019843">
    <property type="term" value="F:rRNA binding"/>
    <property type="evidence" value="ECO:0007669"/>
    <property type="project" value="UniProtKB-UniRule"/>
</dbReference>
<dbReference type="GO" id="GO:0003735">
    <property type="term" value="F:structural constituent of ribosome"/>
    <property type="evidence" value="ECO:0007669"/>
    <property type="project" value="InterPro"/>
</dbReference>
<dbReference type="GO" id="GO:0000049">
    <property type="term" value="F:tRNA binding"/>
    <property type="evidence" value="ECO:0007669"/>
    <property type="project" value="UniProtKB-KW"/>
</dbReference>
<dbReference type="GO" id="GO:0006412">
    <property type="term" value="P:translation"/>
    <property type="evidence" value="ECO:0007669"/>
    <property type="project" value="UniProtKB-UniRule"/>
</dbReference>
<dbReference type="CDD" id="cd01433">
    <property type="entry name" value="Ribosomal_L16_L10e"/>
    <property type="match status" value="1"/>
</dbReference>
<dbReference type="FunFam" id="3.90.1170.10:FF:000001">
    <property type="entry name" value="50S ribosomal protein L16"/>
    <property type="match status" value="1"/>
</dbReference>
<dbReference type="Gene3D" id="3.90.1170.10">
    <property type="entry name" value="Ribosomal protein L10e/L16"/>
    <property type="match status" value="1"/>
</dbReference>
<dbReference type="HAMAP" id="MF_01342">
    <property type="entry name" value="Ribosomal_uL16"/>
    <property type="match status" value="1"/>
</dbReference>
<dbReference type="InterPro" id="IPR047873">
    <property type="entry name" value="Ribosomal_uL16"/>
</dbReference>
<dbReference type="InterPro" id="IPR000114">
    <property type="entry name" value="Ribosomal_uL16_bact-type"/>
</dbReference>
<dbReference type="InterPro" id="IPR020798">
    <property type="entry name" value="Ribosomal_uL16_CS"/>
</dbReference>
<dbReference type="InterPro" id="IPR016180">
    <property type="entry name" value="Ribosomal_uL16_dom"/>
</dbReference>
<dbReference type="InterPro" id="IPR036920">
    <property type="entry name" value="Ribosomal_uL16_sf"/>
</dbReference>
<dbReference type="NCBIfam" id="TIGR01164">
    <property type="entry name" value="rplP_bact"/>
    <property type="match status" value="1"/>
</dbReference>
<dbReference type="PANTHER" id="PTHR12220">
    <property type="entry name" value="50S/60S RIBOSOMAL PROTEIN L16"/>
    <property type="match status" value="1"/>
</dbReference>
<dbReference type="PANTHER" id="PTHR12220:SF13">
    <property type="entry name" value="LARGE RIBOSOMAL SUBUNIT PROTEIN UL16M"/>
    <property type="match status" value="1"/>
</dbReference>
<dbReference type="Pfam" id="PF00252">
    <property type="entry name" value="Ribosomal_L16"/>
    <property type="match status" value="1"/>
</dbReference>
<dbReference type="PRINTS" id="PR00060">
    <property type="entry name" value="RIBOSOMALL16"/>
</dbReference>
<dbReference type="SUPFAM" id="SSF54686">
    <property type="entry name" value="Ribosomal protein L16p/L10e"/>
    <property type="match status" value="1"/>
</dbReference>
<dbReference type="PROSITE" id="PS00586">
    <property type="entry name" value="RIBOSOMAL_L16_1"/>
    <property type="match status" value="1"/>
</dbReference>
<keyword id="KW-0687">Ribonucleoprotein</keyword>
<keyword id="KW-0689">Ribosomal protein</keyword>
<keyword id="KW-0694">RNA-binding</keyword>
<keyword id="KW-0699">rRNA-binding</keyword>
<keyword id="KW-0820">tRNA-binding</keyword>
<evidence type="ECO:0000255" key="1">
    <source>
        <dbReference type="HAMAP-Rule" id="MF_01342"/>
    </source>
</evidence>
<evidence type="ECO:0000305" key="2"/>
<accession>B4S098</accession>
<accession>F2G6D8</accession>
<organism>
    <name type="scientific">Alteromonas mediterranea (strain DSM 17117 / CIP 110805 / LMG 28347 / Deep ecotype)</name>
    <dbReference type="NCBI Taxonomy" id="1774373"/>
    <lineage>
        <taxon>Bacteria</taxon>
        <taxon>Pseudomonadati</taxon>
        <taxon>Pseudomonadota</taxon>
        <taxon>Gammaproteobacteria</taxon>
        <taxon>Alteromonadales</taxon>
        <taxon>Alteromonadaceae</taxon>
        <taxon>Alteromonas/Salinimonas group</taxon>
        <taxon>Alteromonas</taxon>
    </lineage>
</organism>
<reference key="1">
    <citation type="journal article" date="2008" name="ISME J.">
        <title>Comparative genomics of two ecotypes of the marine planktonic copiotroph Alteromonas macleodii suggests alternative lifestyles associated with different kinds of particulate organic matter.</title>
        <authorList>
            <person name="Ivars-Martinez E."/>
            <person name="Martin-Cuadrado A.-B."/>
            <person name="D'Auria G."/>
            <person name="Mira A."/>
            <person name="Ferriera S."/>
            <person name="Johnson J."/>
            <person name="Friedman R."/>
            <person name="Rodriguez-Valera F."/>
        </authorList>
    </citation>
    <scope>NUCLEOTIDE SEQUENCE [LARGE SCALE GENOMIC DNA]</scope>
    <source>
        <strain>DSM 17117 / CIP 110805 / LMG 28347 / Deep ecotype</strain>
    </source>
</reference>
<name>RL16_ALTMD</name>
<protein>
    <recommendedName>
        <fullName evidence="1">Large ribosomal subunit protein uL16</fullName>
    </recommendedName>
    <alternativeName>
        <fullName evidence="2">50S ribosomal protein L16</fullName>
    </alternativeName>
</protein>